<sequence length="3563" mass="391166">MSISVPEKLQDLTAVKSPSAFGNSIESINGDKNKSERHTASSSAVSTYEIGHPCLLTNFKLAVACSGPAITKVATVNDKDSGAKLKNVINGKDISASEVFKGAWAVVLGTYLAKSHVSLDYGVMKPKGLGPETSCNARVPSENSEMSTSSFLLRANDTLLDIIRQNSMCAHTELRQKSSLDDVESPKRCNTCVIYWPEISCSEQLQIDAWMTILEENDQLTQYDCMIHFASDMRCMLSYRDQFMSESQARHLAATMRVVLSSIASAPQQSLADVDVCSSLDYRTLSRWNFKAPIVSEVCVHDLIEKSCSPRPNPQAVVSWDGCLTYNEMDRLSSHLAQRLRDAGVEPGVFVALCLDRCKWAVIGIVAVMKAGGAFCALDPSYPVSRLKEMCRDLGITIVLTVKSNIQHASPLASKVFALDDDVYFESALSSAHESASWVNVSPHDPVYAVFTSGSTGKPKGIIMEHASFSACALSSVKPLQIADQDRVLHFASYAFDASVIEILAPLIAGATVAIPSERARLEDLPRAMTDLKATWAFLTPTVARLYRPEQMPTLKTLCLGGEAVNASDTRSWSSKNLISGYNPAECCPLGISGPLNDRMPRSLGSTFASQTAWIVDPKDHEKLLPAGAIGELAIEGPVVARGYIHDVTCSDPSTPFVVKPPPWLRRFRATANRGNRIYLTGDLARLDCDDGSVHYLGRKDDQVKIHGQRVELAEIEHHLEQHFVSLATKVVVMLLRPISGRTVLAALIMPHQRLQHGDKSLESLLMEPGDVSQDFRANLASAASKLRLALPSHMVPSVYLPIRHFPTTKGGKIDRGHLQSLLLSLPPECLYGSEEATTRRGEEPKSDREKLLQALFAQSLDLPRTRIDLDSNFFQLGGDSLSAMKLLALALEEGISSIAYQDIFSHPTLREIVIVSTSATSREPLSSETVETPPFSLIKDPEMLIQIASEQCGSGVGKADIEDIYPCTHLQQSLMASTAHNPNAYVAILAFKLKSGVDRTRLERAWHIACSGHTILRTRLVQTDTGDCYQVVVKQPPHWTETNEVSDDGSTDSLLRTSFGLGRPLIQSHLSTDQLFVAMHHALYDGWSLPMLIGELDLAYRELSVRRLPCLKNYVKYTMDSADAAASFWQAELQDADPVHFPAPSSLDYKPQPCAAMTVSVPLVNSPRRNVTLATEIQFAWAMTVYTYTGCKDVIFGLISSGRAAPVAQIESMLGPTFASTPLRVSIDPQGKLGEALDDLQYTIVEQSMFVHFGAQAIRQLGPNAAAACNFQTVLAVETAGPDTGVEEGSWFTGYDFLSDLASFSSHALTLRCKLSAKGVEINAVYDKAVVDERQMGRILAQFEHILTEIHSNETIHDDIGSLDKLSRSDWRELQAWNSDLPPPHPKGLGAHQVIQEKCQAQPDATAIDAWDGSVTYDELERRAEKLAGLVRSYVSKPDQVVVLYFSKSRLTVVTQLAILKAGAAFITLDITQPPHHLRRIIAALGPALILVLTSDELLSAAEELQEGAAVMAVDKDHLSNGIIASQTSSSACAVECELMYVVATSGTTGVPKIIMTNHQSFMTNASPLMNRMGITAESRVFQFCGYSFDLMIAEHFLTLLAGGCICIPSLHNRNNRFAASIVEFKANWIGAPSSVLQLLDPQTVPTVKTIMQGGERLQQGLVDRWAPSARLINAYGPAECSVAALVSDTVRPDTENVQNLGFATGSVCWIVNADTEGKLLPVPIGAEGELLIEGHTLSRGYLGDLDKTNAVFLALPDWLRDFRADCNQGQGHRAYLTGDIVRQNSDGSISFVRRKDAQVKIRGQRVELADVEHQVERCFAGSHQVVTDIVQISDSQSSILVALVLTKDVMTNYKQQESLLDQKSAGGLSILAPTSSFTANANAAETALQDRIPAYMVPDLFVPVSDFPREASGKVGRRTIKQYLASLTQQDWSRYSLTRKVPPSNATEHEILAIWARVLRIEPHTFGVHDSFFRLGGDSISSMRVAAACGVAGISVTVKDMFEYRTIRKLALARGVTQQMDVATTSTEANASVVSQKKAPHIFYPEGRLEIYMERMQSRLGQAIERIYPCSPIQQGILMSHARNAHHYDEVIQWRVAGDVWCDISRMQRAWREVVSRHGILRTLFLQVSEDSFLDQVVLKNYSPHISVYTDGEDWEAYRPFEDSVPMHQLLVIQRSADDVTVSLRIHHALVDGLSLHIIRRDLEHAYQGCLDDLVEPPAYHEYISYLQEKRLQESPKEYWKSYLQGATGALFPAVQDEPAEDGQYFGVVEIELGPSAKLTQFCEEHKLGMTVVLHVVWAIIVQRYTATDEVCFGFMTSGRHVPVANVENMVGPLFNMLIGRVKLAYNLSLLSTMYEYQENFINSLDHQQQSLVESLHSIGSSAGDLFNTLITVFNDQPEGHASQQQSTLRLVGDIVQSRSEYPITLNIVSCADKIKMQLSYHAILLNSVSANAIAEAFRFVLQRTLERPHELLRALPVLDEDQMNSVFEKNSSVPPQVEELIHDTIHQQCIRCPDSPSVCAWDGNFTYRQLDELSSALSREIVRKGAGPEVTIPIVLEKTRWTPVAMLAVLKSGSSFVLMDSTHPAVRVGSIVQAIGPPVIIVSAQTRSKVATFSTDVVEVGDWLAREILVAKQHVTRQNGLLQATNAAYLVFTSGSTGKPKGAIVEHASLSTAAKYMASRLHIDSASRVLQFSSHAWDIPVTEVLVTLRMGGCVCVPSEEERTGNLAKASERMKVNWALWTPTVARLFKPEEFPHLKTLVFAGEALSATDLETWCDRVRLVQGYGPAECSLISTVTDPLTRSDNPRCIGLPSGCVAWVVNRDNHELLAPPGATGELVLEGPIVGRGYLGDPGRAASAFISPPAWLMRLRGSGSSNRLYKTGDLVRQHVSSGLLTFVGRNDDQVKVRGQRVEPGEVEGQVAQVFPGSQVIVLVVKKSAGAVLAALVLQNGEDRSSAGETANLFPPPSLAFAALAKAAFSKLREDHAYAATGKADRNLLRDRVASLSAEEDRGICGGPVCRPGPPRTALEAELPRLVGQVLPKASSFPFPLDEDPIPDLGMDSPPGPDPLASSCAPTWVGGFRSNHFPALATVRFGSYRRAGAARNQFTESARRSSCYINKRLVSLLPEICTKWDLREDQITHIAPTTYYQHMALASDHEAFFGLYFSKPMASEALKAAASRVVNLHSILRTAFVPLEDTYVQLTLCDFDLPSQEIQTNEAEVSAAMELFCRDAADKTAGFGVPVTKLILMLDRQGDCLSLLLRLQRAQFDGVSVMRIMADWRSALEHASCSWEPAPSLDYADFALARVAQNTPDVFGMWRDQEYISMTDRGHAERLVTSSCDIPLPEPAPGYTMATVAKAAWAICLARETESEDLLFLQLVRNRHLALDGIDKMVGCSLNYVPVRVPLRRDWKISDLLHWLHQQHIRTMAGDTADWPDVVAKSTTWSSDTEFGSVIHYLSAPAAPVYHFPGDTVAQFQLYDEKMTHTCPLVTCIEFPGPTEQSGRQMKILVTSAVGGQDMVDRLLAVFRSLLCEANAQLDQSVSNILQGLRDGDDAMGKAR</sequence>
<name>LPSA2_CLAPU</name>
<gene>
    <name evidence="18" type="primary">lpsA2</name>
    <name evidence="17" type="synonym">cpps4</name>
</gene>
<comment type="function">
    <text evidence="3 6 7 8 9 10 11 12 13 14 15 16 21 22">D-lysergyl-peptide-synthetase subunit 1; part of the gene cluster that mediates the biosynthesis of fungal ergot alkaloid (PubMed:14700635, PubMed:14732265, PubMed:15904941, PubMed:17308187, PubMed:17720822). DmaW catalyzes the first step of ergot alkaloid biosynthesis by condensing dimethylallyl diphosphate (DMAP) and tryptophan to form 4-dimethylallyl-L-tryptophan (PubMed:14732265). The second step is catalyzed by the methyltransferase easF that methylates 4-dimethylallyl-L-tryptophan in the presence of S-adenosyl-L-methionine, resulting in the formation of 4-dimethylallyl-L-abrine (By similarity). The catalase easC and the FAD-dependent oxidoreductase easE then transform 4-dimethylallyl-L-abrine to chanoclavine-I which is further oxidized by easD in the presence of NAD(+), resulting in the formation of chanoclavine-I aldehyde (PubMed:20118373, PubMed:21409592). Agroclavine dehydrogenase easG then mediates the conversion of chanoclavine-I aldehyde to agroclavine via a non-enzymatic adduct reaction: the substrate is an iminium intermediate that is formed spontaneously from chanoclavine-I aldehyde in the presence of glutathione (PubMed:20735127, PubMed:21494745). The presence of easA is not required to complete this reaction (PubMed:21494745). Further conversion of agroclavine to paspalic acid is a two-step process involving oxidation of agroclavine to elymoclavine and of elymoclavine to paspalic acid, the second step being performed by the elymoclavine oxidase cloA (PubMed:16538694, PubMed:17720822). Paspalic acid is then further converted to D-lysergic acid (PubMed:15904941). Ergopeptines are assembled from D-lysergic acid and three different amino acids by the D-lysergyl-peptide-synthetases composed each of a monomudular and a trimodular nonribosomal peptide synthetase subunit (PubMed:14700635, PubMed:15904941). LpsB and lpsC encode the monomodular subunits responsible for D-lysergic acid activation and incorporation into the ergopeptine backbone (PubMed:14700635). LpsA1 and A2 subunits encode the trimodular nonribosomal peptide synthetase assembling the tripeptide portion of ergopeptines (PubMed:14700635). LpsA1 is responsible for formation of the major ergopeptine, ergotamine, and lpsA2 for alpha-ergocryptine, the minor ergopeptine of the total alkaloid mixture elaborated by C.purpurea (PubMed:17560817, PubMed:19139103). D-lysergyl-tripeptides are assembled by the nonribosomal peptide synthetases and released as N-(D-lysergyl-aminoacyl)-lactams (PubMed:24361048). Cyclolization of the D-lysergyl-tripeptides is performed by the Fe(2+)/2-ketoglutarate-dependent dioxygenase easH which introduces a hydroxyl group into N-(D-lysergyl-aminoacyl)-lactam at alpha-C of the aminoacyl residue followed by spontaneous condensation with the terminal lactam carbonyl group (PubMed:24361048).</text>
</comment>
<comment type="pathway">
    <text evidence="20">Alkaloid biosynthesis; ergot alkaloid biosynthesis.</text>
</comment>
<comment type="domain">
    <text evidence="2 8 11">NRP synthetases are composed of discrete domains (adenylation (A), thiolation (T) or peptidyl carrier protein (PCP) and condensation (C) domains) which when grouped together are referred to as a single module (By similarity). Each module is responsible for the recognition (via the A domain) and incorporation of a single amino acid into the growing peptide product (By similarity). Thus, an NRP synthetase is generally composed of one or more modules and can terminate in a thioesterase domain (TE) or reductase domain (R) that releases the newly synthesized peptide from the enzyme (By similarity). LpsA2 has a domain arrangement (A-T-C-A-T-C-A-T-Cyc) with 3 A and 3 peptidyl carrier (PCP/T) domains, 2 C-domains, and a terminal domain called the Cyc domain (PubMed:15904941, PubMed:19139103). The Cyc domain has limited similarity to both C and Cy domains of NRPS but is most different in the so-called C3 and Cy3 motif of the latter domains, suggesting a special mechanism in acyl diketopiperazine formation, which is the final step of D-lysergyl peptide lactam synthesis (By similarity). LpsA2 misses an N-terminal C domain in the first module, leading to the conclusion that this C domain is located on the other subunit (lpsB or lpsC) containing the D-lysergic acid module (By similarity).</text>
</comment>
<comment type="similarity">
    <text evidence="19">Belongs to the NRP synthetase family.</text>
</comment>
<comment type="sequence caution" evidence="19">
    <conflict type="frameshift">
        <sequence resource="EMBL-CDS" id="CAI59268"/>
    </conflict>
</comment>
<organism>
    <name type="scientific">Claviceps purpurea</name>
    <name type="common">Ergot fungus</name>
    <name type="synonym">Sphacelia segetum</name>
    <dbReference type="NCBI Taxonomy" id="5111"/>
    <lineage>
        <taxon>Eukaryota</taxon>
        <taxon>Fungi</taxon>
        <taxon>Dikarya</taxon>
        <taxon>Ascomycota</taxon>
        <taxon>Pezizomycotina</taxon>
        <taxon>Sordariomycetes</taxon>
        <taxon>Hypocreomycetidae</taxon>
        <taxon>Hypocreales</taxon>
        <taxon>Clavicipitaceae</taxon>
        <taxon>Claviceps</taxon>
    </lineage>
</organism>
<protein>
    <recommendedName>
        <fullName evidence="19">D-lysergyl-peptide-synthetase subunit 1</fullName>
        <ecNumber evidence="20">2.3.1.-</ecNumber>
    </recommendedName>
    <alternativeName>
        <fullName evidence="17">Ergot alkaloid synthesis protein ps4</fullName>
    </alternativeName>
    <alternativeName>
        <fullName evidence="17">Nonribosomal peptide synthetase 1</fullName>
    </alternativeName>
</protein>
<accession>Q2PBY4</accession>
<feature type="chain" id="PRO_0000439108" description="D-lysergyl-peptide-synthetase subunit 1">
    <location>
        <begin position="1"/>
        <end position="3563"/>
    </location>
</feature>
<feature type="domain" description="Carrier 1" evidence="5 20 23">
    <location>
        <begin position="844"/>
        <end position="921"/>
    </location>
</feature>
<feature type="domain" description="Carrier 2" evidence="5 20 23">
    <location>
        <begin position="1944"/>
        <end position="2020"/>
    </location>
</feature>
<feature type="domain" description="Carrier 3" evidence="5 23">
    <location>
        <begin position="3025"/>
        <end position="3104"/>
    </location>
</feature>
<feature type="region of interest" description="Adenylation (A) domain 1" evidence="4 20 23">
    <location>
        <begin position="307"/>
        <end position="706"/>
    </location>
</feature>
<feature type="region of interest" description="Condensation (C) domain 1" evidence="4 20 23">
    <location>
        <begin position="963"/>
        <end position="1354"/>
    </location>
</feature>
<feature type="region of interest" description="Adenylation (A) domain 2" evidence="4 20 23">
    <location>
        <begin position="1397"/>
        <end position="1804"/>
    </location>
</feature>
<feature type="region of interest" description="Condensation (C) domain 2" evidence="4 20 23">
    <location>
        <begin position="2067"/>
        <end position="2486"/>
    </location>
</feature>
<feature type="region of interest" description="Adenylation (A) domain 3" evidence="4 20 23">
    <location>
        <begin position="2511"/>
        <end position="2909"/>
    </location>
</feature>
<feature type="region of interest" description="Cyclization (Cyc) domain" evidence="1 4">
    <location>
        <begin position="3166"/>
        <end position="3451"/>
    </location>
</feature>
<feature type="modified residue" description="O-(pantetheine 4'-phosphoryl)serine" evidence="5">
    <location>
        <position position="881"/>
    </location>
</feature>
<feature type="modified residue" description="O-(pantetheine 4'-phosphoryl)serine" evidence="5">
    <location>
        <position position="1981"/>
    </location>
</feature>
<feature type="modified residue" description="O-(pantetheine 4'-phosphoryl)serine" evidence="5">
    <location>
        <position position="3064"/>
    </location>
</feature>
<dbReference type="EC" id="2.3.1.-" evidence="20"/>
<dbReference type="EMBL" id="AJ884678">
    <property type="protein sequence ID" value="CAI59268.1"/>
    <property type="status" value="ALT_FRAME"/>
    <property type="molecule type" value="Genomic_DNA"/>
</dbReference>
<dbReference type="SMR" id="Q2PBY4"/>
<dbReference type="VEuPathDB" id="FungiDB:CPUR_04074"/>
<dbReference type="UniPathway" id="UPA00327"/>
<dbReference type="GO" id="GO:0005737">
    <property type="term" value="C:cytoplasm"/>
    <property type="evidence" value="ECO:0007669"/>
    <property type="project" value="TreeGrafter"/>
</dbReference>
<dbReference type="GO" id="GO:0016874">
    <property type="term" value="F:ligase activity"/>
    <property type="evidence" value="ECO:0007669"/>
    <property type="project" value="UniProtKB-KW"/>
</dbReference>
<dbReference type="GO" id="GO:0031177">
    <property type="term" value="F:phosphopantetheine binding"/>
    <property type="evidence" value="ECO:0007669"/>
    <property type="project" value="InterPro"/>
</dbReference>
<dbReference type="GO" id="GO:0016740">
    <property type="term" value="F:transferase activity"/>
    <property type="evidence" value="ECO:0007669"/>
    <property type="project" value="UniProtKB-KW"/>
</dbReference>
<dbReference type="GO" id="GO:0043041">
    <property type="term" value="P:amino acid activation for nonribosomal peptide biosynthetic process"/>
    <property type="evidence" value="ECO:0007669"/>
    <property type="project" value="TreeGrafter"/>
</dbReference>
<dbReference type="GO" id="GO:0035835">
    <property type="term" value="P:indole alkaloid biosynthetic process"/>
    <property type="evidence" value="ECO:0007669"/>
    <property type="project" value="UniProtKB-UniPathway"/>
</dbReference>
<dbReference type="CDD" id="cd05918">
    <property type="entry name" value="A_NRPS_SidN3_like"/>
    <property type="match status" value="3"/>
</dbReference>
<dbReference type="CDD" id="cd19542">
    <property type="entry name" value="CT_NRPS-like"/>
    <property type="match status" value="2"/>
</dbReference>
<dbReference type="CDD" id="cd19545">
    <property type="entry name" value="FUM14_C_NRPS-like"/>
    <property type="match status" value="1"/>
</dbReference>
<dbReference type="FunFam" id="3.30.300.30:FF:000015">
    <property type="entry name" value="Nonribosomal peptide synthase SidD"/>
    <property type="match status" value="2"/>
</dbReference>
<dbReference type="FunFam" id="1.10.1200.10:FF:000005">
    <property type="entry name" value="Nonribosomal peptide synthetase 1"/>
    <property type="match status" value="1"/>
</dbReference>
<dbReference type="FunFam" id="3.40.50.12780:FF:000014">
    <property type="entry name" value="Nonribosomal peptide synthetase 1"/>
    <property type="match status" value="1"/>
</dbReference>
<dbReference type="Gene3D" id="3.30.300.30">
    <property type="match status" value="3"/>
</dbReference>
<dbReference type="Gene3D" id="1.10.1200.10">
    <property type="entry name" value="ACP-like"/>
    <property type="match status" value="2"/>
</dbReference>
<dbReference type="Gene3D" id="3.30.559.10">
    <property type="entry name" value="Chloramphenicol acetyltransferase-like domain"/>
    <property type="match status" value="3"/>
</dbReference>
<dbReference type="Gene3D" id="3.40.50.12780">
    <property type="entry name" value="N-terminal domain of ligase-like"/>
    <property type="match status" value="3"/>
</dbReference>
<dbReference type="Gene3D" id="3.30.559.30">
    <property type="entry name" value="Nonribosomal peptide synthetase, condensation domain"/>
    <property type="match status" value="4"/>
</dbReference>
<dbReference type="InterPro" id="IPR010071">
    <property type="entry name" value="AA_adenyl_dom"/>
</dbReference>
<dbReference type="InterPro" id="IPR036736">
    <property type="entry name" value="ACP-like_sf"/>
</dbReference>
<dbReference type="InterPro" id="IPR045851">
    <property type="entry name" value="AMP-bd_C_sf"/>
</dbReference>
<dbReference type="InterPro" id="IPR020845">
    <property type="entry name" value="AMP-binding_CS"/>
</dbReference>
<dbReference type="InterPro" id="IPR000873">
    <property type="entry name" value="AMP-dep_synth/lig_dom"/>
</dbReference>
<dbReference type="InterPro" id="IPR042099">
    <property type="entry name" value="ANL_N_sf"/>
</dbReference>
<dbReference type="InterPro" id="IPR023213">
    <property type="entry name" value="CAT-like_dom_sf"/>
</dbReference>
<dbReference type="InterPro" id="IPR001242">
    <property type="entry name" value="Condensatn"/>
</dbReference>
<dbReference type="InterPro" id="IPR020806">
    <property type="entry name" value="PKS_PP-bd"/>
</dbReference>
<dbReference type="InterPro" id="IPR009081">
    <property type="entry name" value="PP-bd_ACP"/>
</dbReference>
<dbReference type="InterPro" id="IPR006162">
    <property type="entry name" value="Ppantetheine_attach_site"/>
</dbReference>
<dbReference type="NCBIfam" id="TIGR01733">
    <property type="entry name" value="AA-adenyl-dom"/>
    <property type="match status" value="2"/>
</dbReference>
<dbReference type="NCBIfam" id="NF003417">
    <property type="entry name" value="PRK04813.1"/>
    <property type="match status" value="3"/>
</dbReference>
<dbReference type="PANTHER" id="PTHR45527:SF16">
    <property type="entry name" value="NONRIBOSOMAL PEPTIDE SYNTHASE ATNA-RELATED"/>
    <property type="match status" value="1"/>
</dbReference>
<dbReference type="PANTHER" id="PTHR45527">
    <property type="entry name" value="NONRIBOSOMAL PEPTIDE SYNTHETASE"/>
    <property type="match status" value="1"/>
</dbReference>
<dbReference type="Pfam" id="PF00501">
    <property type="entry name" value="AMP-binding"/>
    <property type="match status" value="3"/>
</dbReference>
<dbReference type="Pfam" id="PF00668">
    <property type="entry name" value="Condensation"/>
    <property type="match status" value="2"/>
</dbReference>
<dbReference type="Pfam" id="PF00550">
    <property type="entry name" value="PP-binding"/>
    <property type="match status" value="2"/>
</dbReference>
<dbReference type="SMART" id="SM00823">
    <property type="entry name" value="PKS_PP"/>
    <property type="match status" value="2"/>
</dbReference>
<dbReference type="SUPFAM" id="SSF56801">
    <property type="entry name" value="Acetyl-CoA synthetase-like"/>
    <property type="match status" value="3"/>
</dbReference>
<dbReference type="SUPFAM" id="SSF47336">
    <property type="entry name" value="ACP-like"/>
    <property type="match status" value="2"/>
</dbReference>
<dbReference type="SUPFAM" id="SSF52777">
    <property type="entry name" value="CoA-dependent acyltransferases"/>
    <property type="match status" value="7"/>
</dbReference>
<dbReference type="PROSITE" id="PS00455">
    <property type="entry name" value="AMP_BINDING"/>
    <property type="match status" value="2"/>
</dbReference>
<dbReference type="PROSITE" id="PS50075">
    <property type="entry name" value="CARRIER"/>
    <property type="match status" value="2"/>
</dbReference>
<dbReference type="PROSITE" id="PS00012">
    <property type="entry name" value="PHOSPHOPANTETHEINE"/>
    <property type="match status" value="1"/>
</dbReference>
<proteinExistence type="inferred from homology"/>
<keyword id="KW-0436">Ligase</keyword>
<keyword id="KW-0596">Phosphopantetheine</keyword>
<keyword id="KW-0597">Phosphoprotein</keyword>
<keyword id="KW-0677">Repeat</keyword>
<keyword id="KW-0808">Transferase</keyword>
<reference key="1">
    <citation type="journal article" date="2005" name="Phytochemistry">
        <title>The ergot alkaloid gene cluster in Claviceps purpurea: extension of the cluster sequence and intra species evolution.</title>
        <authorList>
            <person name="Haarmann T."/>
            <person name="Machado C."/>
            <person name="Lubbe Y."/>
            <person name="Correia T."/>
            <person name="Schardl C.L."/>
            <person name="Panaccione D.G."/>
            <person name="Tudzynski P."/>
        </authorList>
    </citation>
    <scope>NUCLEOTIDE SEQUENCE [GENOMIC DNA]</scope>
    <scope>IDENTIFICATION IN THE EAS CLUSTER</scope>
    <scope>FUNCTION</scope>
    <scope>DOMAIN</scope>
    <source>
        <strain>P1 / 1029/N5</strain>
    </source>
</reference>
<reference key="2">
    <citation type="journal article" date="2001" name="Appl. Microbiol. Biotechnol.">
        <title>Biotechnology and genetics of ergot alkaloids.</title>
        <authorList>
            <person name="Tudzynski P."/>
            <person name="Correia T."/>
            <person name="Keller U."/>
        </authorList>
    </citation>
    <scope>BIOTECHNOLOGY</scope>
    <source>
        <strain>P1 / 1029/N5</strain>
    </source>
</reference>
<reference key="3">
    <citation type="journal article" date="2003" name="Chem. Biol.">
        <title>Molecular cloning and analysis of the ergopeptine assembly system in the ergot fungus Claviceps purpurea.</title>
        <authorList>
            <person name="Correia T."/>
            <person name="Grammel N."/>
            <person name="Ortel I."/>
            <person name="Keller U."/>
            <person name="Tudzynski P."/>
        </authorList>
    </citation>
    <scope>FUNCTION</scope>
</reference>
<reference key="4">
    <citation type="journal article" date="2004" name="Fungal Genet. Biol.">
        <title>The determinant step in ergot alkaloid biosynthesis by an endophyte of perennial ryegrass.</title>
        <authorList>
            <person name="Wang J."/>
            <person name="Machado C."/>
            <person name="Panaccione D.G."/>
            <person name="Tsai H.-F."/>
            <person name="Schardl C.L."/>
        </authorList>
    </citation>
    <scope>FUNCTION</scope>
    <source>
        <strain>ATCC 20102 / Farmitalia FI 32/17</strain>
    </source>
</reference>
<reference key="5">
    <citation type="journal article" date="2006" name="ChemBioChem">
        <title>Identification of the cytochrome P450 monooxygenase that bridges the clavine and ergoline alkaloid pathways.</title>
        <authorList>
            <person name="Haarmann T."/>
            <person name="Ortel I."/>
            <person name="Tudzynski P."/>
            <person name="Keller U."/>
        </authorList>
    </citation>
    <scope>FUNCTION</scope>
    <source>
        <strain>P1 / 1029/N5</strain>
    </source>
</reference>
<reference key="6">
    <citation type="journal article" date="2007" name="Appl. Environ. Microbiol.">
        <title>A complex ergovaline gene cluster in epichloe endophytes of grasses.</title>
        <authorList>
            <person name="Fleetwood D.J."/>
            <person name="Scott B."/>
            <person name="Lane G.A."/>
            <person name="Tanaka A."/>
            <person name="Johnson R.D."/>
        </authorList>
    </citation>
    <scope>FUNCTION</scope>
</reference>
<reference key="7">
    <citation type="journal article" date="2007" name="Appl. Environ. Microbiol.">
        <title>Comparison of ergot alkaloid biosynthesis gene clusters in Claviceps species indicates loss of late pathway steps in evolution of C. fusiformis.</title>
        <authorList>
            <person name="Lorenz N."/>
            <person name="Wilson E.V."/>
            <person name="Machado C."/>
            <person name="Schardl C.L."/>
            <person name="Tudzynski P."/>
        </authorList>
    </citation>
    <scope>FUNCTION</scope>
</reference>
<reference key="8">
    <citation type="journal article" date="2008" name="Fungal Genet. Biol.">
        <title>Use of a nonhomologous end joining deficient strain (Deltaku70) of the ergot fungus Claviceps purpurea for identification of a nonribosomal peptide synthetase gene involved in ergotamine biosynthesis.</title>
        <authorList>
            <person name="Haarmann T."/>
            <person name="Lorenz N."/>
            <person name="Tudzynski P."/>
        </authorList>
    </citation>
    <scope>FUNCTION</scope>
</reference>
<reference key="9">
    <citation type="journal article" date="2009" name="J. Biol. Chem.">
        <title>Combinatorial assembly of simple and complex D-lysergic acid alkaloid peptide classes in the ergot fungus Claviceps purpurea.</title>
        <authorList>
            <person name="Ortel I."/>
            <person name="Keller U."/>
        </authorList>
    </citation>
    <scope>FUNCTION</scope>
    <scope>DOMAIN</scope>
</reference>
<reference key="10">
    <citation type="journal article" date="2010" name="Appl. Environ. Microbiol.">
        <title>Alkaloid cluster gene ccsA of the ergot fungus Claviceps purpurea encodes chanoclavine I synthase, a flavin adenine dinucleotide-containing oxidoreductase mediating the transformation of N-methyl-dimethylallyltryptophan to chanoclavine I.</title>
        <authorList>
            <person name="Lorenz N."/>
            <person name="Olsovska J."/>
            <person name="Sulc M."/>
            <person name="Tudzynski P."/>
        </authorList>
    </citation>
    <scope>FUNCTION</scope>
</reference>
<reference key="11">
    <citation type="journal article" date="2010" name="J. Am. Chem. Soc.">
        <title>Controlling a structural branch point in ergot alkaloid biosynthesis.</title>
        <authorList>
            <person name="Cheng J.Z."/>
            <person name="Coyle C.M."/>
            <person name="Panaccione D.G."/>
            <person name="O'Connor S.E."/>
        </authorList>
    </citation>
    <scope>FUNCTION</scope>
    <source>
        <strain>ATCC 20102 / Farmitalia FI 32/17</strain>
    </source>
</reference>
<reference key="12">
    <citation type="journal article" date="2011" name="Curr. Genet.">
        <title>Ergot cluster-encoded catalase is required for synthesis of chanoclavine-I in Aspergillus fumigatus.</title>
        <authorList>
            <person name="Goetz K.E."/>
            <person name="Coyle C.M."/>
            <person name="Cheng J.Z."/>
            <person name="O'Connor S.E."/>
            <person name="Panaccione D.G."/>
        </authorList>
    </citation>
    <scope>FUNCTION</scope>
</reference>
<reference key="13">
    <citation type="journal article" date="2011" name="Org. Biomol. Chem.">
        <title>New insights into ergot alkaloid biosynthesis in Claviceps purpurea: an agroclavine synthase EasG catalyses, via a non-enzymatic adduct with reduced glutathione, the conversion of chanoclavine-I aldehyde to agroclavine.</title>
        <authorList>
            <person name="Matuschek M."/>
            <person name="Wallwey C."/>
            <person name="Xie X."/>
            <person name="Li S.M."/>
        </authorList>
    </citation>
    <scope>FUNCTION</scope>
</reference>
<reference key="14">
    <citation type="journal article" date="2014" name="Chem. Biol.">
        <title>Cyclolization of D-lysergic acid alkaloid peptides.</title>
        <authorList>
            <person name="Havemann J."/>
            <person name="Vogel D."/>
            <person name="Loll B."/>
            <person name="Keller U."/>
        </authorList>
    </citation>
    <scope>FUNCTION</scope>
</reference>
<evidence type="ECO:0000250" key="1">
    <source>
        <dbReference type="UniProtKB" id="M1W5Z4"/>
    </source>
</evidence>
<evidence type="ECO:0000250" key="2">
    <source>
        <dbReference type="UniProtKB" id="O94205"/>
    </source>
</evidence>
<evidence type="ECO:0000250" key="3">
    <source>
        <dbReference type="UniProtKB" id="Q50EL0"/>
    </source>
</evidence>
<evidence type="ECO:0000255" key="4"/>
<evidence type="ECO:0000255" key="5">
    <source>
        <dbReference type="PROSITE-ProRule" id="PRU00258"/>
    </source>
</evidence>
<evidence type="ECO:0000269" key="6">
    <source>
    </source>
</evidence>
<evidence type="ECO:0000269" key="7">
    <source>
    </source>
</evidence>
<evidence type="ECO:0000269" key="8">
    <source>
    </source>
</evidence>
<evidence type="ECO:0000269" key="9">
    <source>
    </source>
</evidence>
<evidence type="ECO:0000269" key="10">
    <source>
    </source>
</evidence>
<evidence type="ECO:0000269" key="11">
    <source>
    </source>
</evidence>
<evidence type="ECO:0000269" key="12">
    <source>
    </source>
</evidence>
<evidence type="ECO:0000269" key="13">
    <source>
    </source>
</evidence>
<evidence type="ECO:0000269" key="14">
    <source>
    </source>
</evidence>
<evidence type="ECO:0000269" key="15">
    <source>
    </source>
</evidence>
<evidence type="ECO:0000269" key="16">
    <source>
    </source>
</evidence>
<evidence type="ECO:0000303" key="17">
    <source>
    </source>
</evidence>
<evidence type="ECO:0000303" key="18">
    <source>
    </source>
</evidence>
<evidence type="ECO:0000305" key="19"/>
<evidence type="ECO:0000305" key="20">
    <source>
    </source>
</evidence>
<evidence type="ECO:0000305" key="21">
    <source>
    </source>
</evidence>
<evidence type="ECO:0000305" key="22">
    <source>
    </source>
</evidence>
<evidence type="ECO:0000305" key="23">
    <source>
    </source>
</evidence>